<accession>Q2A4R2</accession>
<feature type="chain" id="PRO_0000356463" description="Large ribosomal subunit protein bL33">
    <location>
        <begin position="1"/>
        <end position="51"/>
    </location>
</feature>
<name>RL33_FRATH</name>
<evidence type="ECO:0000255" key="1">
    <source>
        <dbReference type="HAMAP-Rule" id="MF_00294"/>
    </source>
</evidence>
<evidence type="ECO:0000305" key="2"/>
<proteinExistence type="inferred from homology"/>
<comment type="similarity">
    <text evidence="1">Belongs to the bacterial ribosomal protein bL33 family.</text>
</comment>
<gene>
    <name evidence="1" type="primary">rpmG</name>
    <name type="ordered locus">FTL_0521</name>
</gene>
<protein>
    <recommendedName>
        <fullName evidence="1">Large ribosomal subunit protein bL33</fullName>
    </recommendedName>
    <alternativeName>
        <fullName evidence="2">50S ribosomal protein L33</fullName>
    </alternativeName>
</protein>
<organism>
    <name type="scientific">Francisella tularensis subsp. holarctica (strain LVS)</name>
    <dbReference type="NCBI Taxonomy" id="376619"/>
    <lineage>
        <taxon>Bacteria</taxon>
        <taxon>Pseudomonadati</taxon>
        <taxon>Pseudomonadota</taxon>
        <taxon>Gammaproteobacteria</taxon>
        <taxon>Thiotrichales</taxon>
        <taxon>Francisellaceae</taxon>
        <taxon>Francisella</taxon>
    </lineage>
</organism>
<keyword id="KW-1185">Reference proteome</keyword>
<keyword id="KW-0687">Ribonucleoprotein</keyword>
<keyword id="KW-0689">Ribosomal protein</keyword>
<reference key="1">
    <citation type="submission" date="2006-03" db="EMBL/GenBank/DDBJ databases">
        <title>Complete genome sequence of Francisella tularensis LVS (Live Vaccine Strain).</title>
        <authorList>
            <person name="Chain P."/>
            <person name="Larimer F."/>
            <person name="Land M."/>
            <person name="Stilwagen S."/>
            <person name="Larsson P."/>
            <person name="Bearden S."/>
            <person name="Chu M."/>
            <person name="Oyston P."/>
            <person name="Forsman M."/>
            <person name="Andersson S."/>
            <person name="Lindler L."/>
            <person name="Titball R."/>
            <person name="Garcia E."/>
        </authorList>
    </citation>
    <scope>NUCLEOTIDE SEQUENCE [LARGE SCALE GENOMIC DNA]</scope>
    <source>
        <strain>LVS</strain>
    </source>
</reference>
<dbReference type="EMBL" id="AM233362">
    <property type="protein sequence ID" value="CAJ78961.1"/>
    <property type="molecule type" value="Genomic_DNA"/>
</dbReference>
<dbReference type="RefSeq" id="WP_003014820.1">
    <property type="nucleotide sequence ID" value="NZ_CP009694.1"/>
</dbReference>
<dbReference type="SMR" id="Q2A4R2"/>
<dbReference type="GeneID" id="75264166"/>
<dbReference type="KEGG" id="ftl:FTL_0521"/>
<dbReference type="Proteomes" id="UP000001944">
    <property type="component" value="Chromosome"/>
</dbReference>
<dbReference type="GO" id="GO:0022625">
    <property type="term" value="C:cytosolic large ribosomal subunit"/>
    <property type="evidence" value="ECO:0007669"/>
    <property type="project" value="TreeGrafter"/>
</dbReference>
<dbReference type="GO" id="GO:0003735">
    <property type="term" value="F:structural constituent of ribosome"/>
    <property type="evidence" value="ECO:0007669"/>
    <property type="project" value="InterPro"/>
</dbReference>
<dbReference type="GO" id="GO:0006412">
    <property type="term" value="P:translation"/>
    <property type="evidence" value="ECO:0007669"/>
    <property type="project" value="UniProtKB-UniRule"/>
</dbReference>
<dbReference type="FunFam" id="2.20.28.120:FF:000001">
    <property type="entry name" value="50S ribosomal protein L33"/>
    <property type="match status" value="1"/>
</dbReference>
<dbReference type="Gene3D" id="2.20.28.120">
    <property type="entry name" value="Ribosomal protein L33"/>
    <property type="match status" value="1"/>
</dbReference>
<dbReference type="HAMAP" id="MF_00294">
    <property type="entry name" value="Ribosomal_bL33"/>
    <property type="match status" value="1"/>
</dbReference>
<dbReference type="InterPro" id="IPR001705">
    <property type="entry name" value="Ribosomal_bL33"/>
</dbReference>
<dbReference type="InterPro" id="IPR018264">
    <property type="entry name" value="Ribosomal_bL33_CS"/>
</dbReference>
<dbReference type="InterPro" id="IPR038584">
    <property type="entry name" value="Ribosomal_bL33_sf"/>
</dbReference>
<dbReference type="InterPro" id="IPR011332">
    <property type="entry name" value="Ribosomal_zn-bd"/>
</dbReference>
<dbReference type="NCBIfam" id="NF001860">
    <property type="entry name" value="PRK00595.1"/>
    <property type="match status" value="1"/>
</dbReference>
<dbReference type="NCBIfam" id="TIGR01023">
    <property type="entry name" value="rpmG_bact"/>
    <property type="match status" value="1"/>
</dbReference>
<dbReference type="PANTHER" id="PTHR15238">
    <property type="entry name" value="54S RIBOSOMAL PROTEIN L39, MITOCHONDRIAL"/>
    <property type="match status" value="1"/>
</dbReference>
<dbReference type="PANTHER" id="PTHR15238:SF1">
    <property type="entry name" value="LARGE RIBOSOMAL SUBUNIT PROTEIN BL33M"/>
    <property type="match status" value="1"/>
</dbReference>
<dbReference type="Pfam" id="PF00471">
    <property type="entry name" value="Ribosomal_L33"/>
    <property type="match status" value="1"/>
</dbReference>
<dbReference type="SUPFAM" id="SSF57829">
    <property type="entry name" value="Zn-binding ribosomal proteins"/>
    <property type="match status" value="1"/>
</dbReference>
<dbReference type="PROSITE" id="PS00582">
    <property type="entry name" value="RIBOSOMAL_L33"/>
    <property type="match status" value="1"/>
</dbReference>
<sequence length="51" mass="6141">MREKIRLVSSAKTGHFYTTTKNKKEMPNKMEIKKYDPVVRKHVMYKEAKIK</sequence>